<evidence type="ECO:0000255" key="1">
    <source>
        <dbReference type="HAMAP-Rule" id="MF_00373"/>
    </source>
</evidence>
<evidence type="ECO:0000305" key="2"/>
<dbReference type="EMBL" id="AP006716">
    <property type="protein sequence ID" value="BAE05000.1"/>
    <property type="molecule type" value="Genomic_DNA"/>
</dbReference>
<dbReference type="RefSeq" id="WP_011275976.1">
    <property type="nucleotide sequence ID" value="NC_007168.1"/>
</dbReference>
<dbReference type="SMR" id="Q4L5S5"/>
<dbReference type="GeneID" id="93781069"/>
<dbReference type="KEGG" id="sha:SH1691"/>
<dbReference type="eggNOG" id="COG0227">
    <property type="taxonomic scope" value="Bacteria"/>
</dbReference>
<dbReference type="HOGENOM" id="CLU_064548_7_1_9"/>
<dbReference type="OrthoDB" id="9805609at2"/>
<dbReference type="Proteomes" id="UP000000543">
    <property type="component" value="Chromosome"/>
</dbReference>
<dbReference type="GO" id="GO:1990904">
    <property type="term" value="C:ribonucleoprotein complex"/>
    <property type="evidence" value="ECO:0007669"/>
    <property type="project" value="UniProtKB-KW"/>
</dbReference>
<dbReference type="GO" id="GO:0005840">
    <property type="term" value="C:ribosome"/>
    <property type="evidence" value="ECO:0007669"/>
    <property type="project" value="UniProtKB-KW"/>
</dbReference>
<dbReference type="GO" id="GO:0003735">
    <property type="term" value="F:structural constituent of ribosome"/>
    <property type="evidence" value="ECO:0007669"/>
    <property type="project" value="InterPro"/>
</dbReference>
<dbReference type="GO" id="GO:0006412">
    <property type="term" value="P:translation"/>
    <property type="evidence" value="ECO:0007669"/>
    <property type="project" value="UniProtKB-UniRule"/>
</dbReference>
<dbReference type="Gene3D" id="2.30.170.40">
    <property type="entry name" value="Ribosomal protein L28/L24"/>
    <property type="match status" value="1"/>
</dbReference>
<dbReference type="HAMAP" id="MF_00373">
    <property type="entry name" value="Ribosomal_bL28"/>
    <property type="match status" value="1"/>
</dbReference>
<dbReference type="InterPro" id="IPR050096">
    <property type="entry name" value="Bacterial_rp_bL28"/>
</dbReference>
<dbReference type="InterPro" id="IPR026569">
    <property type="entry name" value="Ribosomal_bL28"/>
</dbReference>
<dbReference type="InterPro" id="IPR034704">
    <property type="entry name" value="Ribosomal_bL28/bL31-like_sf"/>
</dbReference>
<dbReference type="InterPro" id="IPR001383">
    <property type="entry name" value="Ribosomal_bL28_bact-type"/>
</dbReference>
<dbReference type="InterPro" id="IPR037147">
    <property type="entry name" value="Ribosomal_bL28_sf"/>
</dbReference>
<dbReference type="NCBIfam" id="TIGR00009">
    <property type="entry name" value="L28"/>
    <property type="match status" value="1"/>
</dbReference>
<dbReference type="PANTHER" id="PTHR39080">
    <property type="entry name" value="50S RIBOSOMAL PROTEIN L28"/>
    <property type="match status" value="1"/>
</dbReference>
<dbReference type="PANTHER" id="PTHR39080:SF1">
    <property type="entry name" value="LARGE RIBOSOMAL SUBUNIT PROTEIN BL28A"/>
    <property type="match status" value="1"/>
</dbReference>
<dbReference type="Pfam" id="PF00830">
    <property type="entry name" value="Ribosomal_L28"/>
    <property type="match status" value="1"/>
</dbReference>
<dbReference type="SUPFAM" id="SSF143800">
    <property type="entry name" value="L28p-like"/>
    <property type="match status" value="1"/>
</dbReference>
<organism>
    <name type="scientific">Staphylococcus haemolyticus (strain JCSC1435)</name>
    <dbReference type="NCBI Taxonomy" id="279808"/>
    <lineage>
        <taxon>Bacteria</taxon>
        <taxon>Bacillati</taxon>
        <taxon>Bacillota</taxon>
        <taxon>Bacilli</taxon>
        <taxon>Bacillales</taxon>
        <taxon>Staphylococcaceae</taxon>
        <taxon>Staphylococcus</taxon>
    </lineage>
</organism>
<proteinExistence type="inferred from homology"/>
<name>RL28_STAHJ</name>
<feature type="chain" id="PRO_0000178556" description="Large ribosomal subunit protein bL28">
    <location>
        <begin position="1"/>
        <end position="62"/>
    </location>
</feature>
<accession>Q4L5S5</accession>
<gene>
    <name evidence="1" type="primary">rpmB</name>
    <name type="ordered locus">SH1691</name>
</gene>
<comment type="similarity">
    <text evidence="1">Belongs to the bacterial ribosomal protein bL28 family.</text>
</comment>
<keyword id="KW-0687">Ribonucleoprotein</keyword>
<keyword id="KW-0689">Ribosomal protein</keyword>
<sequence length="62" mass="6909">MGKQCYVTGRKASTGNNRSHALNANKRRFNANLQKVRILVDGKPKKVWVSARALKSGKVTRV</sequence>
<protein>
    <recommendedName>
        <fullName evidence="1">Large ribosomal subunit protein bL28</fullName>
    </recommendedName>
    <alternativeName>
        <fullName evidence="2">50S ribosomal protein L28</fullName>
    </alternativeName>
</protein>
<reference key="1">
    <citation type="journal article" date="2005" name="J. Bacteriol.">
        <title>Whole-genome sequencing of Staphylococcus haemolyticus uncovers the extreme plasticity of its genome and the evolution of human-colonizing staphylococcal species.</title>
        <authorList>
            <person name="Takeuchi F."/>
            <person name="Watanabe S."/>
            <person name="Baba T."/>
            <person name="Yuzawa H."/>
            <person name="Ito T."/>
            <person name="Morimoto Y."/>
            <person name="Kuroda M."/>
            <person name="Cui L."/>
            <person name="Takahashi M."/>
            <person name="Ankai A."/>
            <person name="Baba S."/>
            <person name="Fukui S."/>
            <person name="Lee J.C."/>
            <person name="Hiramatsu K."/>
        </authorList>
    </citation>
    <scope>NUCLEOTIDE SEQUENCE [LARGE SCALE GENOMIC DNA]</scope>
    <source>
        <strain>JCSC1435</strain>
    </source>
</reference>